<gene>
    <name evidence="1" type="primary">purA</name>
    <name type="ordered locus">M6_Spy0183</name>
</gene>
<name>PURA_STRP6</name>
<reference key="1">
    <citation type="journal article" date="2004" name="J. Infect. Dis.">
        <title>Progress toward characterization of the group A Streptococcus metagenome: complete genome sequence of a macrolide-resistant serotype M6 strain.</title>
        <authorList>
            <person name="Banks D.J."/>
            <person name="Porcella S.F."/>
            <person name="Barbian K.D."/>
            <person name="Beres S.B."/>
            <person name="Philips L.E."/>
            <person name="Voyich J.M."/>
            <person name="DeLeo F.R."/>
            <person name="Martin J.M."/>
            <person name="Somerville G.A."/>
            <person name="Musser J.M."/>
        </authorList>
    </citation>
    <scope>NUCLEOTIDE SEQUENCE [LARGE SCALE GENOMIC DNA]</scope>
    <source>
        <strain>ATCC BAA-946 / MGAS10394</strain>
    </source>
</reference>
<protein>
    <recommendedName>
        <fullName evidence="1">Adenylosuccinate synthetase</fullName>
        <shortName evidence="1">AMPSase</shortName>
        <shortName evidence="1">AdSS</shortName>
        <ecNumber evidence="1">6.3.4.4</ecNumber>
    </recommendedName>
    <alternativeName>
        <fullName evidence="1">IMP--aspartate ligase</fullName>
    </alternativeName>
</protein>
<accession>Q5XE45</accession>
<sequence>MTSVVVVGTQWGDEGKGKITDFLSADAEVIARYQGGDNAGHTIVIDGKKFKLHLIPSGIFFPQKISVIGNGVVVNPKSLVKELAYLHDEGVTTDNLRISDRAHVILPYHIQLDQLQEDAKGDNKIGTTIKGIGPAYMDKAARVGIRIADLLDKDIFAERLRINLAEKNRLFEKMYDSTPLDFDAIFEEYYAYGQEIKQYVTDTSVILNDALDAGKRVLFEGAQGVMLDIDQGTYPFVTSSNPVAGGVTIGSGVGPSKINKVVGVCKAYTSRVGDGPFPTELFDEVGERIREVGHEYGTTTGRPRRVGWFDSVVMRHSRRVSGITNLSLNSIDVLSGLDAVKICVAYDLDGERIDYYPASLEQLKRCKPIYEELPGWQEDITGVRSLDELPENARNYVRRIGELVGVRISTFSVGPGREQTNILESVWASI</sequence>
<organism>
    <name type="scientific">Streptococcus pyogenes serotype M6 (strain ATCC BAA-946 / MGAS10394)</name>
    <dbReference type="NCBI Taxonomy" id="286636"/>
    <lineage>
        <taxon>Bacteria</taxon>
        <taxon>Bacillati</taxon>
        <taxon>Bacillota</taxon>
        <taxon>Bacilli</taxon>
        <taxon>Lactobacillales</taxon>
        <taxon>Streptococcaceae</taxon>
        <taxon>Streptococcus</taxon>
    </lineage>
</organism>
<proteinExistence type="inferred from homology"/>
<keyword id="KW-0963">Cytoplasm</keyword>
<keyword id="KW-0342">GTP-binding</keyword>
<keyword id="KW-0436">Ligase</keyword>
<keyword id="KW-0460">Magnesium</keyword>
<keyword id="KW-0479">Metal-binding</keyword>
<keyword id="KW-0547">Nucleotide-binding</keyword>
<keyword id="KW-0658">Purine biosynthesis</keyword>
<comment type="function">
    <text evidence="1">Plays an important role in the de novo pathway of purine nucleotide biosynthesis. Catalyzes the first committed step in the biosynthesis of AMP from IMP.</text>
</comment>
<comment type="catalytic activity">
    <reaction evidence="1">
        <text>IMP + L-aspartate + GTP = N(6)-(1,2-dicarboxyethyl)-AMP + GDP + phosphate + 2 H(+)</text>
        <dbReference type="Rhea" id="RHEA:15753"/>
        <dbReference type="ChEBI" id="CHEBI:15378"/>
        <dbReference type="ChEBI" id="CHEBI:29991"/>
        <dbReference type="ChEBI" id="CHEBI:37565"/>
        <dbReference type="ChEBI" id="CHEBI:43474"/>
        <dbReference type="ChEBI" id="CHEBI:57567"/>
        <dbReference type="ChEBI" id="CHEBI:58053"/>
        <dbReference type="ChEBI" id="CHEBI:58189"/>
        <dbReference type="EC" id="6.3.4.4"/>
    </reaction>
</comment>
<comment type="cofactor">
    <cofactor evidence="1">
        <name>Mg(2+)</name>
        <dbReference type="ChEBI" id="CHEBI:18420"/>
    </cofactor>
    <text evidence="1">Binds 1 Mg(2+) ion per subunit.</text>
</comment>
<comment type="pathway">
    <text evidence="1">Purine metabolism; AMP biosynthesis via de novo pathway; AMP from IMP: step 1/2.</text>
</comment>
<comment type="subunit">
    <text evidence="1">Homodimer.</text>
</comment>
<comment type="subcellular location">
    <subcellularLocation>
        <location evidence="1">Cytoplasm</location>
    </subcellularLocation>
</comment>
<comment type="similarity">
    <text evidence="1">Belongs to the adenylosuccinate synthetase family.</text>
</comment>
<evidence type="ECO:0000255" key="1">
    <source>
        <dbReference type="HAMAP-Rule" id="MF_00011"/>
    </source>
</evidence>
<dbReference type="EC" id="6.3.4.4" evidence="1"/>
<dbReference type="EMBL" id="CP000003">
    <property type="protein sequence ID" value="AAT86318.1"/>
    <property type="molecule type" value="Genomic_DNA"/>
</dbReference>
<dbReference type="RefSeq" id="WP_011017279.1">
    <property type="nucleotide sequence ID" value="NC_006086.1"/>
</dbReference>
<dbReference type="SMR" id="Q5XE45"/>
<dbReference type="KEGG" id="spa:M6_Spy0183"/>
<dbReference type="HOGENOM" id="CLU_029848_0_0_9"/>
<dbReference type="UniPathway" id="UPA00075">
    <property type="reaction ID" value="UER00335"/>
</dbReference>
<dbReference type="Proteomes" id="UP000001167">
    <property type="component" value="Chromosome"/>
</dbReference>
<dbReference type="GO" id="GO:0005737">
    <property type="term" value="C:cytoplasm"/>
    <property type="evidence" value="ECO:0007669"/>
    <property type="project" value="UniProtKB-SubCell"/>
</dbReference>
<dbReference type="GO" id="GO:0004019">
    <property type="term" value="F:adenylosuccinate synthase activity"/>
    <property type="evidence" value="ECO:0007669"/>
    <property type="project" value="UniProtKB-UniRule"/>
</dbReference>
<dbReference type="GO" id="GO:0005525">
    <property type="term" value="F:GTP binding"/>
    <property type="evidence" value="ECO:0007669"/>
    <property type="project" value="UniProtKB-UniRule"/>
</dbReference>
<dbReference type="GO" id="GO:0000287">
    <property type="term" value="F:magnesium ion binding"/>
    <property type="evidence" value="ECO:0007669"/>
    <property type="project" value="UniProtKB-UniRule"/>
</dbReference>
<dbReference type="GO" id="GO:0044208">
    <property type="term" value="P:'de novo' AMP biosynthetic process"/>
    <property type="evidence" value="ECO:0007669"/>
    <property type="project" value="UniProtKB-UniRule"/>
</dbReference>
<dbReference type="GO" id="GO:0046040">
    <property type="term" value="P:IMP metabolic process"/>
    <property type="evidence" value="ECO:0007669"/>
    <property type="project" value="TreeGrafter"/>
</dbReference>
<dbReference type="CDD" id="cd03108">
    <property type="entry name" value="AdSS"/>
    <property type="match status" value="1"/>
</dbReference>
<dbReference type="FunFam" id="1.10.300.10:FF:000001">
    <property type="entry name" value="Adenylosuccinate synthetase"/>
    <property type="match status" value="1"/>
</dbReference>
<dbReference type="FunFam" id="3.90.170.10:FF:000001">
    <property type="entry name" value="Adenylosuccinate synthetase"/>
    <property type="match status" value="1"/>
</dbReference>
<dbReference type="Gene3D" id="3.40.440.10">
    <property type="entry name" value="Adenylosuccinate Synthetase, subunit A, domain 1"/>
    <property type="match status" value="1"/>
</dbReference>
<dbReference type="Gene3D" id="1.10.300.10">
    <property type="entry name" value="Adenylosuccinate Synthetase, subunit A, domain 2"/>
    <property type="match status" value="1"/>
</dbReference>
<dbReference type="Gene3D" id="3.90.170.10">
    <property type="entry name" value="Adenylosuccinate Synthetase, subunit A, domain 3"/>
    <property type="match status" value="1"/>
</dbReference>
<dbReference type="HAMAP" id="MF_00011">
    <property type="entry name" value="Adenylosucc_synth"/>
    <property type="match status" value="1"/>
</dbReference>
<dbReference type="InterPro" id="IPR018220">
    <property type="entry name" value="Adenylosuccin_syn_GTP-bd"/>
</dbReference>
<dbReference type="InterPro" id="IPR033128">
    <property type="entry name" value="Adenylosuccin_syn_Lys_AS"/>
</dbReference>
<dbReference type="InterPro" id="IPR042109">
    <property type="entry name" value="Adenylosuccinate_synth_dom1"/>
</dbReference>
<dbReference type="InterPro" id="IPR042110">
    <property type="entry name" value="Adenylosuccinate_synth_dom2"/>
</dbReference>
<dbReference type="InterPro" id="IPR042111">
    <property type="entry name" value="Adenylosuccinate_synth_dom3"/>
</dbReference>
<dbReference type="InterPro" id="IPR001114">
    <property type="entry name" value="Adenylosuccinate_synthetase"/>
</dbReference>
<dbReference type="InterPro" id="IPR027417">
    <property type="entry name" value="P-loop_NTPase"/>
</dbReference>
<dbReference type="NCBIfam" id="NF002223">
    <property type="entry name" value="PRK01117.1"/>
    <property type="match status" value="1"/>
</dbReference>
<dbReference type="NCBIfam" id="TIGR00184">
    <property type="entry name" value="purA"/>
    <property type="match status" value="1"/>
</dbReference>
<dbReference type="PANTHER" id="PTHR11846">
    <property type="entry name" value="ADENYLOSUCCINATE SYNTHETASE"/>
    <property type="match status" value="1"/>
</dbReference>
<dbReference type="PANTHER" id="PTHR11846:SF0">
    <property type="entry name" value="ADENYLOSUCCINATE SYNTHETASE"/>
    <property type="match status" value="1"/>
</dbReference>
<dbReference type="Pfam" id="PF00709">
    <property type="entry name" value="Adenylsucc_synt"/>
    <property type="match status" value="1"/>
</dbReference>
<dbReference type="SMART" id="SM00788">
    <property type="entry name" value="Adenylsucc_synt"/>
    <property type="match status" value="1"/>
</dbReference>
<dbReference type="SUPFAM" id="SSF52540">
    <property type="entry name" value="P-loop containing nucleoside triphosphate hydrolases"/>
    <property type="match status" value="1"/>
</dbReference>
<dbReference type="PROSITE" id="PS01266">
    <property type="entry name" value="ADENYLOSUCCIN_SYN_1"/>
    <property type="match status" value="1"/>
</dbReference>
<dbReference type="PROSITE" id="PS00513">
    <property type="entry name" value="ADENYLOSUCCIN_SYN_2"/>
    <property type="match status" value="1"/>
</dbReference>
<feature type="chain" id="PRO_0000095243" description="Adenylosuccinate synthetase">
    <location>
        <begin position="1"/>
        <end position="430"/>
    </location>
</feature>
<feature type="active site" description="Proton acceptor" evidence="1">
    <location>
        <position position="13"/>
    </location>
</feature>
<feature type="active site" description="Proton donor" evidence="1">
    <location>
        <position position="41"/>
    </location>
</feature>
<feature type="binding site" evidence="1">
    <location>
        <begin position="12"/>
        <end position="18"/>
    </location>
    <ligand>
        <name>GTP</name>
        <dbReference type="ChEBI" id="CHEBI:37565"/>
    </ligand>
</feature>
<feature type="binding site" description="in other chain" evidence="1">
    <location>
        <begin position="13"/>
        <end position="16"/>
    </location>
    <ligand>
        <name>IMP</name>
        <dbReference type="ChEBI" id="CHEBI:58053"/>
        <note>ligand shared between dimeric partners</note>
    </ligand>
</feature>
<feature type="binding site" evidence="1">
    <location>
        <position position="13"/>
    </location>
    <ligand>
        <name>Mg(2+)</name>
        <dbReference type="ChEBI" id="CHEBI:18420"/>
    </ligand>
</feature>
<feature type="binding site" description="in other chain" evidence="1">
    <location>
        <begin position="38"/>
        <end position="41"/>
    </location>
    <ligand>
        <name>IMP</name>
        <dbReference type="ChEBI" id="CHEBI:58053"/>
        <note>ligand shared between dimeric partners</note>
    </ligand>
</feature>
<feature type="binding site" evidence="1">
    <location>
        <begin position="40"/>
        <end position="42"/>
    </location>
    <ligand>
        <name>GTP</name>
        <dbReference type="ChEBI" id="CHEBI:37565"/>
    </ligand>
</feature>
<feature type="binding site" evidence="1">
    <location>
        <position position="40"/>
    </location>
    <ligand>
        <name>Mg(2+)</name>
        <dbReference type="ChEBI" id="CHEBI:18420"/>
    </ligand>
</feature>
<feature type="binding site" description="in other chain" evidence="1">
    <location>
        <position position="128"/>
    </location>
    <ligand>
        <name>IMP</name>
        <dbReference type="ChEBI" id="CHEBI:58053"/>
        <note>ligand shared between dimeric partners</note>
    </ligand>
</feature>
<feature type="binding site" evidence="1">
    <location>
        <position position="142"/>
    </location>
    <ligand>
        <name>IMP</name>
        <dbReference type="ChEBI" id="CHEBI:58053"/>
        <note>ligand shared between dimeric partners</note>
    </ligand>
</feature>
<feature type="binding site" description="in other chain" evidence="1">
    <location>
        <position position="223"/>
    </location>
    <ligand>
        <name>IMP</name>
        <dbReference type="ChEBI" id="CHEBI:58053"/>
        <note>ligand shared between dimeric partners</note>
    </ligand>
</feature>
<feature type="binding site" description="in other chain" evidence="1">
    <location>
        <position position="238"/>
    </location>
    <ligand>
        <name>IMP</name>
        <dbReference type="ChEBI" id="CHEBI:58053"/>
        <note>ligand shared between dimeric partners</note>
    </ligand>
</feature>
<feature type="binding site" evidence="1">
    <location>
        <begin position="298"/>
        <end position="304"/>
    </location>
    <ligand>
        <name>substrate</name>
    </ligand>
</feature>
<feature type="binding site" description="in other chain" evidence="1">
    <location>
        <position position="302"/>
    </location>
    <ligand>
        <name>IMP</name>
        <dbReference type="ChEBI" id="CHEBI:58053"/>
        <note>ligand shared between dimeric partners</note>
    </ligand>
</feature>
<feature type="binding site" evidence="1">
    <location>
        <position position="304"/>
    </location>
    <ligand>
        <name>GTP</name>
        <dbReference type="ChEBI" id="CHEBI:37565"/>
    </ligand>
</feature>
<feature type="binding site" evidence="1">
    <location>
        <begin position="330"/>
        <end position="332"/>
    </location>
    <ligand>
        <name>GTP</name>
        <dbReference type="ChEBI" id="CHEBI:37565"/>
    </ligand>
</feature>
<feature type="binding site" evidence="1">
    <location>
        <begin position="412"/>
        <end position="414"/>
    </location>
    <ligand>
        <name>GTP</name>
        <dbReference type="ChEBI" id="CHEBI:37565"/>
    </ligand>
</feature>